<sequence length="222" mass="24720">MSNLYGDYNQKIDYVFKVVLIGDSAVGKTQLLARFARNEFSVDSKATIGVEFQTKTLVIDNKTVKAQIWDTAGQERYRAVTSAYYRGAVGAMLVYDMTKRQSFDHMAKWLEELRGHADKNIVIMLIGNKCDLGSLRAVPTEDAQEFAQRENLFFMETSALEATNVETAFLTILTEIYRIISKKSLTADDDDADGNSSLLKGTRIIIPSEQESGKRGGCCGKS</sequence>
<evidence type="ECO:0000250" key="1"/>
<evidence type="ECO:0000269" key="2">
    <source>
    </source>
</evidence>
<evidence type="ECO:0000305" key="3"/>
<evidence type="ECO:0000305" key="4">
    <source>
    </source>
</evidence>
<protein>
    <recommendedName>
        <fullName>Ras-related protein RABA4d</fullName>
        <shortName>AtRABA4d</shortName>
    </recommendedName>
</protein>
<feature type="chain" id="PRO_0000407347" description="Ras-related protein RABA4d">
    <location>
        <begin position="1"/>
        <end position="222"/>
    </location>
</feature>
<feature type="short sequence motif" description="Effector region" evidence="1">
    <location>
        <begin position="44"/>
        <end position="52"/>
    </location>
</feature>
<feature type="binding site" evidence="1">
    <location>
        <begin position="22"/>
        <end position="29"/>
    </location>
    <ligand>
        <name>GTP</name>
        <dbReference type="ChEBI" id="CHEBI:37565"/>
    </ligand>
</feature>
<feature type="binding site" evidence="1">
    <location>
        <begin position="70"/>
        <end position="74"/>
    </location>
    <ligand>
        <name>GTP</name>
        <dbReference type="ChEBI" id="CHEBI:37565"/>
    </ligand>
</feature>
<feature type="binding site" evidence="1">
    <location>
        <begin position="128"/>
        <end position="131"/>
    </location>
    <ligand>
        <name>GTP</name>
        <dbReference type="ChEBI" id="CHEBI:37565"/>
    </ligand>
</feature>
<feature type="binding site" evidence="1">
    <location>
        <begin position="158"/>
        <end position="159"/>
    </location>
    <ligand>
        <name>GTP</name>
        <dbReference type="ChEBI" id="CHEBI:37565"/>
    </ligand>
</feature>
<feature type="lipid moiety-binding region" description="S-geranylgeranyl cysteine" evidence="1">
    <location>
        <position position="218"/>
    </location>
</feature>
<feature type="lipid moiety-binding region" description="S-geranylgeranyl cysteine" evidence="1">
    <location>
        <position position="219"/>
    </location>
</feature>
<name>RAA4D_ARATH</name>
<gene>
    <name type="primary">RABA4D</name>
    <name type="ordered locus">At3g12160</name>
    <name type="ORF">F28J15.18</name>
    <name type="ORF">T21B14.2</name>
</gene>
<accession>Q9LH50</accession>
<accession>Q9C7C6</accession>
<organism>
    <name type="scientific">Arabidopsis thaliana</name>
    <name type="common">Mouse-ear cress</name>
    <dbReference type="NCBI Taxonomy" id="3702"/>
    <lineage>
        <taxon>Eukaryota</taxon>
        <taxon>Viridiplantae</taxon>
        <taxon>Streptophyta</taxon>
        <taxon>Embryophyta</taxon>
        <taxon>Tracheophyta</taxon>
        <taxon>Spermatophyta</taxon>
        <taxon>Magnoliopsida</taxon>
        <taxon>eudicotyledons</taxon>
        <taxon>Gunneridae</taxon>
        <taxon>Pentapetalae</taxon>
        <taxon>rosids</taxon>
        <taxon>malvids</taxon>
        <taxon>Brassicales</taxon>
        <taxon>Brassicaceae</taxon>
        <taxon>Camelineae</taxon>
        <taxon>Arabidopsis</taxon>
    </lineage>
</organism>
<dbReference type="EMBL" id="AC069472">
    <property type="protein sequence ID" value="AAG51065.1"/>
    <property type="molecule type" value="Genomic_DNA"/>
</dbReference>
<dbReference type="EMBL" id="AC069473">
    <property type="protein sequence ID" value="AAG51053.1"/>
    <property type="status" value="ALT_SEQ"/>
    <property type="molecule type" value="Genomic_DNA"/>
</dbReference>
<dbReference type="EMBL" id="AP002063">
    <property type="protein sequence ID" value="BAB01966.1"/>
    <property type="molecule type" value="Genomic_DNA"/>
</dbReference>
<dbReference type="EMBL" id="CP002686">
    <property type="protein sequence ID" value="AEE75160.1"/>
    <property type="molecule type" value="Genomic_DNA"/>
</dbReference>
<dbReference type="EMBL" id="DQ056590">
    <property type="protein sequence ID" value="AAY78738.1"/>
    <property type="molecule type" value="mRNA"/>
</dbReference>
<dbReference type="RefSeq" id="NP_187823.1">
    <property type="nucleotide sequence ID" value="NM_112051.2"/>
</dbReference>
<dbReference type="SMR" id="Q9LH50"/>
<dbReference type="FunCoup" id="Q9LH50">
    <property type="interactions" value="288"/>
</dbReference>
<dbReference type="STRING" id="3702.Q9LH50"/>
<dbReference type="GlyGen" id="Q9LH50">
    <property type="glycosylation" value="1 site"/>
</dbReference>
<dbReference type="PaxDb" id="3702-AT3G12160.1"/>
<dbReference type="ProteomicsDB" id="226098"/>
<dbReference type="EnsemblPlants" id="AT3G12160.1">
    <property type="protein sequence ID" value="AT3G12160.1"/>
    <property type="gene ID" value="AT3G12160"/>
</dbReference>
<dbReference type="GeneID" id="820393"/>
<dbReference type="Gramene" id="AT3G12160.1">
    <property type="protein sequence ID" value="AT3G12160.1"/>
    <property type="gene ID" value="AT3G12160"/>
</dbReference>
<dbReference type="KEGG" id="ath:AT3G12160"/>
<dbReference type="Araport" id="AT3G12160"/>
<dbReference type="TAIR" id="AT3G12160">
    <property type="gene designation" value="RABA4D"/>
</dbReference>
<dbReference type="eggNOG" id="KOG0087">
    <property type="taxonomic scope" value="Eukaryota"/>
</dbReference>
<dbReference type="HOGENOM" id="CLU_041217_23_0_1"/>
<dbReference type="InParanoid" id="Q9LH50"/>
<dbReference type="OMA" id="FDHIERW"/>
<dbReference type="OrthoDB" id="9989112at2759"/>
<dbReference type="PhylomeDB" id="Q9LH50"/>
<dbReference type="PRO" id="PR:Q9LH50"/>
<dbReference type="Proteomes" id="UP000006548">
    <property type="component" value="Chromosome 3"/>
</dbReference>
<dbReference type="ExpressionAtlas" id="Q9LH50">
    <property type="expression patterns" value="baseline and differential"/>
</dbReference>
<dbReference type="GO" id="GO:0045177">
    <property type="term" value="C:apical part of cell"/>
    <property type="evidence" value="ECO:0000314"/>
    <property type="project" value="TAIR"/>
</dbReference>
<dbReference type="GO" id="GO:0030659">
    <property type="term" value="C:cytoplasmic vesicle membrane"/>
    <property type="evidence" value="ECO:0007669"/>
    <property type="project" value="UniProtKB-SubCell"/>
</dbReference>
<dbReference type="GO" id="GO:0005829">
    <property type="term" value="C:cytosol"/>
    <property type="evidence" value="ECO:0007005"/>
    <property type="project" value="TAIR"/>
</dbReference>
<dbReference type="GO" id="GO:0070382">
    <property type="term" value="C:exocytic vesicle"/>
    <property type="evidence" value="ECO:0000314"/>
    <property type="project" value="TAIR"/>
</dbReference>
<dbReference type="GO" id="GO:0090404">
    <property type="term" value="C:pollen tube tip"/>
    <property type="evidence" value="ECO:0000314"/>
    <property type="project" value="TAIR"/>
</dbReference>
<dbReference type="GO" id="GO:0005525">
    <property type="term" value="F:GTP binding"/>
    <property type="evidence" value="ECO:0007669"/>
    <property type="project" value="UniProtKB-KW"/>
</dbReference>
<dbReference type="GO" id="GO:0003924">
    <property type="term" value="F:GTPase activity"/>
    <property type="evidence" value="ECO:0007669"/>
    <property type="project" value="InterPro"/>
</dbReference>
<dbReference type="GO" id="GO:0019900">
    <property type="term" value="F:kinase binding"/>
    <property type="evidence" value="ECO:0000353"/>
    <property type="project" value="UniProtKB"/>
</dbReference>
<dbReference type="GO" id="GO:0048868">
    <property type="term" value="P:pollen tube development"/>
    <property type="evidence" value="ECO:0000316"/>
    <property type="project" value="TAIR"/>
</dbReference>
<dbReference type="GO" id="GO:0009860">
    <property type="term" value="P:pollen tube growth"/>
    <property type="evidence" value="ECO:0000314"/>
    <property type="project" value="TAIR"/>
</dbReference>
<dbReference type="GO" id="GO:0015031">
    <property type="term" value="P:protein transport"/>
    <property type="evidence" value="ECO:0007669"/>
    <property type="project" value="UniProtKB-KW"/>
</dbReference>
<dbReference type="GO" id="GO:0080092">
    <property type="term" value="P:regulation of pollen tube growth"/>
    <property type="evidence" value="ECO:0000315"/>
    <property type="project" value="TAIR"/>
</dbReference>
<dbReference type="CDD" id="cd01868">
    <property type="entry name" value="Rab11_like"/>
    <property type="match status" value="1"/>
</dbReference>
<dbReference type="FunFam" id="3.40.50.300:FF:000274">
    <property type="entry name" value="ras-related protein RABA5a"/>
    <property type="match status" value="1"/>
</dbReference>
<dbReference type="Gene3D" id="3.40.50.300">
    <property type="entry name" value="P-loop containing nucleotide triphosphate hydrolases"/>
    <property type="match status" value="1"/>
</dbReference>
<dbReference type="InterPro" id="IPR027417">
    <property type="entry name" value="P-loop_NTPase"/>
</dbReference>
<dbReference type="InterPro" id="IPR050209">
    <property type="entry name" value="Rab_GTPases_membrane_traffic"/>
</dbReference>
<dbReference type="InterPro" id="IPR005225">
    <property type="entry name" value="Small_GTP-bd"/>
</dbReference>
<dbReference type="InterPro" id="IPR001806">
    <property type="entry name" value="Small_GTPase"/>
</dbReference>
<dbReference type="NCBIfam" id="TIGR00231">
    <property type="entry name" value="small_GTP"/>
    <property type="match status" value="1"/>
</dbReference>
<dbReference type="PANTHER" id="PTHR47979">
    <property type="entry name" value="DRAB11-RELATED"/>
    <property type="match status" value="1"/>
</dbReference>
<dbReference type="Pfam" id="PF00071">
    <property type="entry name" value="Ras"/>
    <property type="match status" value="1"/>
</dbReference>
<dbReference type="PRINTS" id="PR00449">
    <property type="entry name" value="RASTRNSFRMNG"/>
</dbReference>
<dbReference type="SMART" id="SM00177">
    <property type="entry name" value="ARF"/>
    <property type="match status" value="1"/>
</dbReference>
<dbReference type="SMART" id="SM00175">
    <property type="entry name" value="RAB"/>
    <property type="match status" value="1"/>
</dbReference>
<dbReference type="SMART" id="SM00176">
    <property type="entry name" value="RAN"/>
    <property type="match status" value="1"/>
</dbReference>
<dbReference type="SMART" id="SM00173">
    <property type="entry name" value="RAS"/>
    <property type="match status" value="1"/>
</dbReference>
<dbReference type="SMART" id="SM00174">
    <property type="entry name" value="RHO"/>
    <property type="match status" value="1"/>
</dbReference>
<dbReference type="SUPFAM" id="SSF52540">
    <property type="entry name" value="P-loop containing nucleoside triphosphate hydrolases"/>
    <property type="match status" value="1"/>
</dbReference>
<dbReference type="PROSITE" id="PS51419">
    <property type="entry name" value="RAB"/>
    <property type="match status" value="1"/>
</dbReference>
<proteinExistence type="evidence at protein level"/>
<comment type="function">
    <text evidence="2">Intracellular vesicle trafficking and protein transport. Plays an important role in the regulation of pollen tube tip growth.</text>
</comment>
<comment type="subunit">
    <text evidence="2">Interacts with PI4KB1.</text>
</comment>
<comment type="subcellular location">
    <subcellularLocation>
        <location evidence="4">Cytoplasmic vesicle membrane</location>
        <topology evidence="4">Lipid-anchor</topology>
    </subcellularLocation>
    <text>Associated with membrane compartments that localize to the tips of growing pollen tubes.</text>
</comment>
<comment type="tissue specificity">
    <text evidence="2">Specifically expressed in pollen and localized to the tips of growing pollen tubes.</text>
</comment>
<comment type="disruption phenotype">
    <text evidence="2">Defects in pollen tube growth and altered deposition of cell wall components.</text>
</comment>
<comment type="similarity">
    <text evidence="3">Belongs to the small GTPase superfamily. Rab family.</text>
</comment>
<comment type="sequence caution" evidence="3">
    <conflict type="erroneous gene model prediction">
        <sequence resource="EMBL-CDS" id="AAG51053"/>
    </conflict>
</comment>
<keyword id="KW-0968">Cytoplasmic vesicle</keyword>
<keyword id="KW-0342">GTP-binding</keyword>
<keyword id="KW-0449">Lipoprotein</keyword>
<keyword id="KW-0472">Membrane</keyword>
<keyword id="KW-0547">Nucleotide-binding</keyword>
<keyword id="KW-0636">Prenylation</keyword>
<keyword id="KW-0653">Protein transport</keyword>
<keyword id="KW-1185">Reference proteome</keyword>
<keyword id="KW-0813">Transport</keyword>
<reference key="1">
    <citation type="journal article" date="2000" name="Nature">
        <title>Sequence and analysis of chromosome 3 of the plant Arabidopsis thaliana.</title>
        <authorList>
            <person name="Salanoubat M."/>
            <person name="Lemcke K."/>
            <person name="Rieger M."/>
            <person name="Ansorge W."/>
            <person name="Unseld M."/>
            <person name="Fartmann B."/>
            <person name="Valle G."/>
            <person name="Bloecker H."/>
            <person name="Perez-Alonso M."/>
            <person name="Obermaier B."/>
            <person name="Delseny M."/>
            <person name="Boutry M."/>
            <person name="Grivell L.A."/>
            <person name="Mache R."/>
            <person name="Puigdomenech P."/>
            <person name="De Simone V."/>
            <person name="Choisne N."/>
            <person name="Artiguenave F."/>
            <person name="Robert C."/>
            <person name="Brottier P."/>
            <person name="Wincker P."/>
            <person name="Cattolico L."/>
            <person name="Weissenbach J."/>
            <person name="Saurin W."/>
            <person name="Quetier F."/>
            <person name="Schaefer M."/>
            <person name="Mueller-Auer S."/>
            <person name="Gabel C."/>
            <person name="Fuchs M."/>
            <person name="Benes V."/>
            <person name="Wurmbach E."/>
            <person name="Drzonek H."/>
            <person name="Erfle H."/>
            <person name="Jordan N."/>
            <person name="Bangert S."/>
            <person name="Wiedelmann R."/>
            <person name="Kranz H."/>
            <person name="Voss H."/>
            <person name="Holland R."/>
            <person name="Brandt P."/>
            <person name="Nyakatura G."/>
            <person name="Vezzi A."/>
            <person name="D'Angelo M."/>
            <person name="Pallavicini A."/>
            <person name="Toppo S."/>
            <person name="Simionati B."/>
            <person name="Conrad A."/>
            <person name="Hornischer K."/>
            <person name="Kauer G."/>
            <person name="Loehnert T.-H."/>
            <person name="Nordsiek G."/>
            <person name="Reichelt J."/>
            <person name="Scharfe M."/>
            <person name="Schoen O."/>
            <person name="Bargues M."/>
            <person name="Terol J."/>
            <person name="Climent J."/>
            <person name="Navarro P."/>
            <person name="Collado C."/>
            <person name="Perez-Perez A."/>
            <person name="Ottenwaelder B."/>
            <person name="Duchemin D."/>
            <person name="Cooke R."/>
            <person name="Laudie M."/>
            <person name="Berger-Llauro C."/>
            <person name="Purnelle B."/>
            <person name="Masuy D."/>
            <person name="de Haan M."/>
            <person name="Maarse A.C."/>
            <person name="Alcaraz J.-P."/>
            <person name="Cottet A."/>
            <person name="Casacuberta E."/>
            <person name="Monfort A."/>
            <person name="Argiriou A."/>
            <person name="Flores M."/>
            <person name="Liguori R."/>
            <person name="Vitale D."/>
            <person name="Mannhaupt G."/>
            <person name="Haase D."/>
            <person name="Schoof H."/>
            <person name="Rudd S."/>
            <person name="Zaccaria P."/>
            <person name="Mewes H.-W."/>
            <person name="Mayer K.F.X."/>
            <person name="Kaul S."/>
            <person name="Town C.D."/>
            <person name="Koo H.L."/>
            <person name="Tallon L.J."/>
            <person name="Jenkins J."/>
            <person name="Rooney T."/>
            <person name="Rizzo M."/>
            <person name="Walts A."/>
            <person name="Utterback T."/>
            <person name="Fujii C.Y."/>
            <person name="Shea T.P."/>
            <person name="Creasy T.H."/>
            <person name="Haas B."/>
            <person name="Maiti R."/>
            <person name="Wu D."/>
            <person name="Peterson J."/>
            <person name="Van Aken S."/>
            <person name="Pai G."/>
            <person name="Militscher J."/>
            <person name="Sellers P."/>
            <person name="Gill J.E."/>
            <person name="Feldblyum T.V."/>
            <person name="Preuss D."/>
            <person name="Lin X."/>
            <person name="Nierman W.C."/>
            <person name="Salzberg S.L."/>
            <person name="White O."/>
            <person name="Venter J.C."/>
            <person name="Fraser C.M."/>
            <person name="Kaneko T."/>
            <person name="Nakamura Y."/>
            <person name="Sato S."/>
            <person name="Kato T."/>
            <person name="Asamizu E."/>
            <person name="Sasamoto S."/>
            <person name="Kimura T."/>
            <person name="Idesawa K."/>
            <person name="Kawashima K."/>
            <person name="Kishida Y."/>
            <person name="Kiyokawa C."/>
            <person name="Kohara M."/>
            <person name="Matsumoto M."/>
            <person name="Matsuno A."/>
            <person name="Muraki A."/>
            <person name="Nakayama S."/>
            <person name="Nakazaki N."/>
            <person name="Shinpo S."/>
            <person name="Takeuchi C."/>
            <person name="Wada T."/>
            <person name="Watanabe A."/>
            <person name="Yamada M."/>
            <person name="Yasuda M."/>
            <person name="Tabata S."/>
        </authorList>
    </citation>
    <scope>NUCLEOTIDE SEQUENCE [LARGE SCALE GENOMIC DNA]</scope>
    <source>
        <strain>cv. Columbia</strain>
    </source>
</reference>
<reference key="2">
    <citation type="journal article" date="2000" name="DNA Res.">
        <title>Structural analysis of Arabidopsis thaliana chromosome 3. II. Sequence features of the 4,251,695 bp regions covered by 90 P1, TAC and BAC clones.</title>
        <authorList>
            <person name="Kaneko T."/>
            <person name="Katoh T."/>
            <person name="Sato S."/>
            <person name="Nakamura Y."/>
            <person name="Asamizu E."/>
            <person name="Tabata S."/>
        </authorList>
    </citation>
    <scope>NUCLEOTIDE SEQUENCE [LARGE SCALE GENOMIC DNA]</scope>
    <source>
        <strain>cv. Columbia</strain>
    </source>
</reference>
<reference key="3">
    <citation type="journal article" date="2017" name="Plant J.">
        <title>Araport11: a complete reannotation of the Arabidopsis thaliana reference genome.</title>
        <authorList>
            <person name="Cheng C.Y."/>
            <person name="Krishnakumar V."/>
            <person name="Chan A.P."/>
            <person name="Thibaud-Nissen F."/>
            <person name="Schobel S."/>
            <person name="Town C.D."/>
        </authorList>
    </citation>
    <scope>GENOME REANNOTATION</scope>
    <source>
        <strain>cv. Columbia</strain>
    </source>
</reference>
<reference key="4">
    <citation type="submission" date="2005-03" db="EMBL/GenBank/DDBJ databases">
        <authorList>
            <person name="Underwood B.A."/>
            <person name="Xiao Y.-L."/>
            <person name="Moskal W.A. Jr."/>
            <person name="Monaghan E.L."/>
            <person name="Wang W."/>
            <person name="Redman J.C."/>
            <person name="Wu H.C."/>
            <person name="Utterback T."/>
            <person name="Town C.D."/>
        </authorList>
    </citation>
    <scope>NUCLEOTIDE SEQUENCE [LARGE SCALE MRNA]</scope>
    <source>
        <strain>cv. Columbia</strain>
    </source>
</reference>
<reference key="5">
    <citation type="journal article" date="2003" name="Plant Physiol.">
        <title>Analysis of the small GTPase gene superfamily of Arabidopsis.</title>
        <authorList>
            <person name="Vernoud V."/>
            <person name="Horton A.C."/>
            <person name="Yang Z."/>
            <person name="Nielsen E."/>
        </authorList>
    </citation>
    <scope>GENE FAMILY</scope>
    <scope>NOMENCLATURE</scope>
</reference>
<reference key="6">
    <citation type="journal article" date="2009" name="Plant Cell">
        <title>The Rab GTPase RabA4d regulates pollen tube tip growth in Arabidopsis thaliana.</title>
        <authorList>
            <person name="Szumlanski A.L."/>
            <person name="Nielsen E."/>
        </authorList>
    </citation>
    <scope>FUNCTION</scope>
    <scope>SUBCELLULAR LOCATION</scope>
    <scope>INTERACTION WITH PI4KB1</scope>
    <scope>TISSUE SPECIFICITY</scope>
    <scope>DISRUPTION PHENOTYPE</scope>
</reference>